<proteinExistence type="evidence at protein level"/>
<feature type="chain" id="PRO_0000074941" description="Bifunctional purine biosynthetic protein ADE5,7">
    <location>
        <begin position="1"/>
        <end position="802"/>
    </location>
</feature>
<feature type="domain" description="ATP-grasp" evidence="3">
    <location>
        <begin position="114"/>
        <end position="330"/>
    </location>
</feature>
<feature type="region of interest" description="GARS" evidence="2">
    <location>
        <begin position="1"/>
        <end position="450"/>
    </location>
</feature>
<feature type="region of interest" description="AIRS" evidence="2">
    <location>
        <begin position="451"/>
        <end position="802"/>
    </location>
</feature>
<feature type="binding site" evidence="3">
    <location>
        <begin position="141"/>
        <end position="203"/>
    </location>
    <ligand>
        <name>ATP</name>
        <dbReference type="ChEBI" id="CHEBI:30616"/>
    </ligand>
</feature>
<feature type="binding site" evidence="3">
    <location>
        <position position="298"/>
    </location>
    <ligand>
        <name>Mg(2+)</name>
        <dbReference type="ChEBI" id="CHEBI:18420"/>
    </ligand>
</feature>
<feature type="binding site" evidence="3">
    <location>
        <position position="300"/>
    </location>
    <ligand>
        <name>Mg(2+)</name>
        <dbReference type="ChEBI" id="CHEBI:18420"/>
    </ligand>
</feature>
<feature type="modified residue" description="Phosphoserine" evidence="9 10">
    <location>
        <position position="455"/>
    </location>
</feature>
<feature type="modified residue" description="Phosphoserine" evidence="10">
    <location>
        <position position="458"/>
    </location>
</feature>
<feature type="sequence conflict" description="In Ref. 4; AAT93005." evidence="7" ref="4">
    <original>K</original>
    <variation>R</variation>
    <location>
        <position position="28"/>
    </location>
</feature>
<reference key="1">
    <citation type="journal article" date="1986" name="J. Mol. Biol.">
        <title>The Saccharomyces cerevisiae ADE5,7 protein is homologous to overlapping Drosophila melanogaster Gart polypeptides.</title>
        <authorList>
            <person name="Henikoff S."/>
        </authorList>
    </citation>
    <scope>NUCLEOTIDE SEQUENCE [GENOMIC DNA]</scope>
</reference>
<reference key="2">
    <citation type="journal article" date="1997" name="Nature">
        <title>The nucleotide sequence of Saccharomyces cerevisiae chromosome VII.</title>
        <authorList>
            <person name="Tettelin H."/>
            <person name="Agostoni-Carbone M.L."/>
            <person name="Albermann K."/>
            <person name="Albers M."/>
            <person name="Arroyo J."/>
            <person name="Backes U."/>
            <person name="Barreiros T."/>
            <person name="Bertani I."/>
            <person name="Bjourson A.J."/>
            <person name="Brueckner M."/>
            <person name="Bruschi C.V."/>
            <person name="Carignani G."/>
            <person name="Castagnoli L."/>
            <person name="Cerdan E."/>
            <person name="Clemente M.L."/>
            <person name="Coblenz A."/>
            <person name="Coglievina M."/>
            <person name="Coissac E."/>
            <person name="Defoor E."/>
            <person name="Del Bino S."/>
            <person name="Delius H."/>
            <person name="Delneri D."/>
            <person name="de Wergifosse P."/>
            <person name="Dujon B."/>
            <person name="Durand P."/>
            <person name="Entian K.-D."/>
            <person name="Eraso P."/>
            <person name="Escribano V."/>
            <person name="Fabiani L."/>
            <person name="Fartmann B."/>
            <person name="Feroli F."/>
            <person name="Feuermann M."/>
            <person name="Frontali L."/>
            <person name="Garcia-Gonzalez M."/>
            <person name="Garcia-Saez M.I."/>
            <person name="Goffeau A."/>
            <person name="Guerreiro P."/>
            <person name="Hani J."/>
            <person name="Hansen M."/>
            <person name="Hebling U."/>
            <person name="Hernandez K."/>
            <person name="Heumann K."/>
            <person name="Hilger F."/>
            <person name="Hofmann B."/>
            <person name="Indge K.J."/>
            <person name="James C.M."/>
            <person name="Klima R."/>
            <person name="Koetter P."/>
            <person name="Kramer B."/>
            <person name="Kramer W."/>
            <person name="Lauquin G."/>
            <person name="Leuther H."/>
            <person name="Louis E.J."/>
            <person name="Maillier E."/>
            <person name="Marconi A."/>
            <person name="Martegani E."/>
            <person name="Mazon M.J."/>
            <person name="Mazzoni C."/>
            <person name="McReynolds A.D.K."/>
            <person name="Melchioretto P."/>
            <person name="Mewes H.-W."/>
            <person name="Minenkova O."/>
            <person name="Mueller-Auer S."/>
            <person name="Nawrocki A."/>
            <person name="Netter P."/>
            <person name="Neu R."/>
            <person name="Nombela C."/>
            <person name="Oliver S.G."/>
            <person name="Panzeri L."/>
            <person name="Paoluzi S."/>
            <person name="Plevani P."/>
            <person name="Portetelle D."/>
            <person name="Portillo F."/>
            <person name="Potier S."/>
            <person name="Purnelle B."/>
            <person name="Rieger M."/>
            <person name="Riles L."/>
            <person name="Rinaldi T."/>
            <person name="Robben J."/>
            <person name="Rodrigues-Pousada C."/>
            <person name="Rodriguez-Belmonte E."/>
            <person name="Rodriguez-Torres A.M."/>
            <person name="Rose M."/>
            <person name="Ruzzi M."/>
            <person name="Saliola M."/>
            <person name="Sanchez-Perez M."/>
            <person name="Schaefer B."/>
            <person name="Schaefer M."/>
            <person name="Scharfe M."/>
            <person name="Schmidheini T."/>
            <person name="Schreer A."/>
            <person name="Skala J."/>
            <person name="Souciet J.-L."/>
            <person name="Steensma H.Y."/>
            <person name="Talla E."/>
            <person name="Thierry A."/>
            <person name="Vandenbol M."/>
            <person name="van der Aart Q.J.M."/>
            <person name="Van Dyck L."/>
            <person name="Vanoni M."/>
            <person name="Verhasselt P."/>
            <person name="Voet M."/>
            <person name="Volckaert G."/>
            <person name="Wambutt R."/>
            <person name="Watson M.D."/>
            <person name="Weber N."/>
            <person name="Wedler E."/>
            <person name="Wedler H."/>
            <person name="Wipfli P."/>
            <person name="Wolf K."/>
            <person name="Wright L.F."/>
            <person name="Zaccaria P."/>
            <person name="Zimmermann M."/>
            <person name="Zollner A."/>
            <person name="Kleine K."/>
        </authorList>
    </citation>
    <scope>NUCLEOTIDE SEQUENCE [LARGE SCALE GENOMIC DNA]</scope>
    <source>
        <strain>ATCC 204508 / S288c</strain>
    </source>
</reference>
<reference key="3">
    <citation type="journal article" date="2014" name="G3 (Bethesda)">
        <title>The reference genome sequence of Saccharomyces cerevisiae: Then and now.</title>
        <authorList>
            <person name="Engel S.R."/>
            <person name="Dietrich F.S."/>
            <person name="Fisk D.G."/>
            <person name="Binkley G."/>
            <person name="Balakrishnan R."/>
            <person name="Costanzo M.C."/>
            <person name="Dwight S.S."/>
            <person name="Hitz B.C."/>
            <person name="Karra K."/>
            <person name="Nash R.S."/>
            <person name="Weng S."/>
            <person name="Wong E.D."/>
            <person name="Lloyd P."/>
            <person name="Skrzypek M.S."/>
            <person name="Miyasato S.R."/>
            <person name="Simison M."/>
            <person name="Cherry J.M."/>
        </authorList>
    </citation>
    <scope>GENOME REANNOTATION</scope>
    <source>
        <strain>ATCC 204508 / S288c</strain>
    </source>
</reference>
<reference key="4">
    <citation type="journal article" date="2007" name="Genome Res.">
        <title>Approaching a complete repository of sequence-verified protein-encoding clones for Saccharomyces cerevisiae.</title>
        <authorList>
            <person name="Hu Y."/>
            <person name="Rolfs A."/>
            <person name="Bhullar B."/>
            <person name="Murthy T.V.S."/>
            <person name="Zhu C."/>
            <person name="Berger M.F."/>
            <person name="Camargo A.A."/>
            <person name="Kelley F."/>
            <person name="McCarron S."/>
            <person name="Jepson D."/>
            <person name="Richardson A."/>
            <person name="Raphael J."/>
            <person name="Moreira D."/>
            <person name="Taycher E."/>
            <person name="Zuo D."/>
            <person name="Mohr S."/>
            <person name="Kane M.F."/>
            <person name="Williamson J."/>
            <person name="Simpson A.J.G."/>
            <person name="Bulyk M.L."/>
            <person name="Harlow E."/>
            <person name="Marsischky G."/>
            <person name="Kolodner R.D."/>
            <person name="LaBaer J."/>
        </authorList>
    </citation>
    <scope>NUCLEOTIDE SEQUENCE [GENOMIC DNA]</scope>
    <source>
        <strain>ATCC 204508 / S288c</strain>
    </source>
</reference>
<reference key="5">
    <citation type="journal article" date="1995" name="Yeast">
        <title>Two-dimensional protein map of Saccharomyces cerevisiae: construction of a gene-protein index.</title>
        <authorList>
            <person name="Boucherie H."/>
            <person name="Dujardin G."/>
            <person name="Kermorgant M."/>
            <person name="Monribot C."/>
            <person name="Slonimski P.P."/>
            <person name="Perrot M."/>
        </authorList>
    </citation>
    <scope>PROTEIN SEQUENCE OF 1-13</scope>
    <source>
        <strain>ATCC 204508 / S288c</strain>
    </source>
</reference>
<reference key="6">
    <citation type="journal article" date="2003" name="Nature">
        <title>Global analysis of protein localization in budding yeast.</title>
        <authorList>
            <person name="Huh W.-K."/>
            <person name="Falvo J.V."/>
            <person name="Gerke L.C."/>
            <person name="Carroll A.S."/>
            <person name="Howson R.W."/>
            <person name="Weissman J.S."/>
            <person name="O'Shea E.K."/>
        </authorList>
    </citation>
    <scope>SUBCELLULAR LOCATION [LARGE SCALE ANALYSIS]</scope>
</reference>
<reference key="7">
    <citation type="journal article" date="2003" name="Nature">
        <title>Global analysis of protein expression in yeast.</title>
        <authorList>
            <person name="Ghaemmaghami S."/>
            <person name="Huh W.-K."/>
            <person name="Bower K."/>
            <person name="Howson R.W."/>
            <person name="Belle A."/>
            <person name="Dephoure N."/>
            <person name="O'Shea E.K."/>
            <person name="Weissman J.S."/>
        </authorList>
    </citation>
    <scope>LEVEL OF PROTEIN EXPRESSION [LARGE SCALE ANALYSIS]</scope>
</reference>
<reference key="8">
    <citation type="journal article" date="2008" name="Mol. Cell. Proteomics">
        <title>A multidimensional chromatography technology for in-depth phosphoproteome analysis.</title>
        <authorList>
            <person name="Albuquerque C.P."/>
            <person name="Smolka M.B."/>
            <person name="Payne S.H."/>
            <person name="Bafna V."/>
            <person name="Eng J."/>
            <person name="Zhou H."/>
        </authorList>
    </citation>
    <scope>PHOSPHORYLATION [LARGE SCALE ANALYSIS] AT SER-455</scope>
    <scope>IDENTIFICATION BY MASS SPECTROMETRY [LARGE SCALE ANALYSIS]</scope>
</reference>
<reference key="9">
    <citation type="journal article" date="2009" name="Science">
        <title>Global analysis of Cdk1 substrate phosphorylation sites provides insights into evolution.</title>
        <authorList>
            <person name="Holt L.J."/>
            <person name="Tuch B.B."/>
            <person name="Villen J."/>
            <person name="Johnson A.D."/>
            <person name="Gygi S.P."/>
            <person name="Morgan D.O."/>
        </authorList>
    </citation>
    <scope>PHOSPHORYLATION [LARGE SCALE ANALYSIS] AT SER-455 AND SER-458</scope>
    <scope>IDENTIFICATION BY MASS SPECTROMETRY [LARGE SCALE ANALYSIS]</scope>
</reference>
<reference key="10">
    <citation type="journal article" date="2012" name="Proc. Natl. Acad. Sci. U.S.A.">
        <title>N-terminal acetylome analyses and functional insights of the N-terminal acetyltransferase NatB.</title>
        <authorList>
            <person name="Van Damme P."/>
            <person name="Lasa M."/>
            <person name="Polevoda B."/>
            <person name="Gazquez C."/>
            <person name="Elosegui-Artola A."/>
            <person name="Kim D.S."/>
            <person name="De Juan-Pardo E."/>
            <person name="Demeyer K."/>
            <person name="Hole K."/>
            <person name="Larrea E."/>
            <person name="Timmerman E."/>
            <person name="Prieto J."/>
            <person name="Arnesen T."/>
            <person name="Sherman F."/>
            <person name="Gevaert K."/>
            <person name="Aldabe R."/>
        </authorList>
    </citation>
    <scope>IDENTIFICATION BY MASS SPECTROMETRY [LARGE SCALE ANALYSIS]</scope>
</reference>
<name>PUR2_YEAST</name>
<organism>
    <name type="scientific">Saccharomyces cerevisiae (strain ATCC 204508 / S288c)</name>
    <name type="common">Baker's yeast</name>
    <dbReference type="NCBI Taxonomy" id="559292"/>
    <lineage>
        <taxon>Eukaryota</taxon>
        <taxon>Fungi</taxon>
        <taxon>Dikarya</taxon>
        <taxon>Ascomycota</taxon>
        <taxon>Saccharomycotina</taxon>
        <taxon>Saccharomycetes</taxon>
        <taxon>Saccharomycetales</taxon>
        <taxon>Saccharomycetaceae</taxon>
        <taxon>Saccharomyces</taxon>
    </lineage>
</organism>
<protein>
    <recommendedName>
        <fullName>Bifunctional purine biosynthetic protein ADE5,7</fullName>
    </recommendedName>
    <domain>
        <recommendedName>
            <fullName>Phosphoribosylamine--glycine ligase</fullName>
            <ecNumber evidence="1">6.3.4.13</ecNumber>
        </recommendedName>
        <alternativeName>
            <fullName>Glycinamide ribonucleotide synthetase</fullName>
            <shortName evidence="7">GAR synthetase</shortName>
            <shortName>GARS</shortName>
        </alternativeName>
        <alternativeName>
            <fullName>Phosphoribosylglycinamide synthetase</fullName>
        </alternativeName>
    </domain>
    <domain>
        <recommendedName>
            <fullName>Phosphoribosylformylglycinamidine cyclo-ligase</fullName>
            <ecNumber evidence="1">6.3.3.1</ecNumber>
        </recommendedName>
        <alternativeName>
            <fullName>AIR synthase</fullName>
            <shortName>AIR synthetase</shortName>
            <shortName>AIRS</shortName>
        </alternativeName>
        <alternativeName>
            <fullName>Phosphoribosyl-aminoimidazole synthetase</fullName>
        </alternativeName>
    </domain>
</protein>
<gene>
    <name evidence="8" type="primary">ADE57</name>
    <name evidence="6" type="synonym">ADE5,7</name>
    <name evidence="8" type="ordered locus">YGL234W</name>
</gene>
<sequence>MLNILVLGNGAREHVLVTKLAQSPTVGKIYVAPGNGGTATMDPSRVINWDITPDVANFARLQSMAVEHKINLVVPGPELPLVNGITSVFHSVGIPVFGPSVKAAQLEASKAFSKRFMSKHNIPTASYDVFTNPEEAISFLQAHTDKAFVIKADGIAAGKGVIIPSSIDESVQAIKDIMVTKQFGEEAGKQVVIEQFLEGDEISLLTIVDGYSHFNLPVAQDHKRIFDGDKGLNTGGMGAYAPAPVATPSLLKTIDSQIVKPTIDGMRRDGMPFVGVLFTGMILVKDSKTNQLVPEVLEYNVRFGDPETQAVLSLLDDQTDLAQVFLAAAEHRLDSVNIGIDDTRSAVTVVVAAGGYPESYAKGDKITLDTDKLPPHTQIFQAGTKYDSATDSLLTNGGRVLSVTSTAQDLRTAVDTVYEAVKCVHFQNSYYRKDIAYRAFQNSESSKVAITYADSGVSVDNGNNLVQTIKEMVRSTRRPGADSDIGGFGGLFDLAQAGFRQNEDTLLVGATDGVGTKLIIAQETGIHNTVGIDLVAMNVNDLVVQGAEPLFFLDYFATGALDIQVASDFVSGVANGCIQSGCALVGGETSEMPGMYPPGHYDTNGTAVGAVLRQDILPKINEMAAGDVLLGLASSGVHSNGFSLVRKIIQHVALPWDAPCPWDESKTLGEGILEPTKIYVKQLLPSIRQRLLLGLAHITGGGLVENIPRAIPDHLQARVDMSTWEVPRVFKWFGQAGNVPHDDILRTFNMGVGMVLIVKRENVKAVCDSLTEEGEIIWELGSLQERPKDAPGCVIENGTKLY</sequence>
<dbReference type="EC" id="6.3.4.13" evidence="1"/>
<dbReference type="EC" id="6.3.3.1" evidence="1"/>
<dbReference type="EMBL" id="X04337">
    <property type="protein sequence ID" value="CAA27867.1"/>
    <property type="molecule type" value="Genomic_DNA"/>
</dbReference>
<dbReference type="EMBL" id="Z72756">
    <property type="protein sequence ID" value="CAA96952.1"/>
    <property type="molecule type" value="Genomic_DNA"/>
</dbReference>
<dbReference type="EMBL" id="AY692986">
    <property type="protein sequence ID" value="AAT93005.1"/>
    <property type="molecule type" value="Genomic_DNA"/>
</dbReference>
<dbReference type="EMBL" id="BK006941">
    <property type="protein sequence ID" value="DAA07884.1"/>
    <property type="molecule type" value="Genomic_DNA"/>
</dbReference>
<dbReference type="PIR" id="A26343">
    <property type="entry name" value="A26343"/>
</dbReference>
<dbReference type="RefSeq" id="NP_011280.1">
    <property type="nucleotide sequence ID" value="NM_001181100.1"/>
</dbReference>
<dbReference type="SMR" id="P07244"/>
<dbReference type="BioGRID" id="33005">
    <property type="interactions" value="101"/>
</dbReference>
<dbReference type="DIP" id="DIP-4080N"/>
<dbReference type="FunCoup" id="P07244">
    <property type="interactions" value="1460"/>
</dbReference>
<dbReference type="IntAct" id="P07244">
    <property type="interactions" value="29"/>
</dbReference>
<dbReference type="MINT" id="P07244"/>
<dbReference type="STRING" id="4932.YGL234W"/>
<dbReference type="GlyGen" id="P07244">
    <property type="glycosylation" value="1 site"/>
</dbReference>
<dbReference type="iPTMnet" id="P07244"/>
<dbReference type="PaxDb" id="4932-YGL234W"/>
<dbReference type="PeptideAtlas" id="P07244"/>
<dbReference type="EnsemblFungi" id="YGL234W_mRNA">
    <property type="protein sequence ID" value="YGL234W"/>
    <property type="gene ID" value="YGL234W"/>
</dbReference>
<dbReference type="GeneID" id="852617"/>
<dbReference type="KEGG" id="sce:YGL234W"/>
<dbReference type="AGR" id="SGD:S000003203"/>
<dbReference type="SGD" id="S000003203">
    <property type="gene designation" value="ADE57"/>
</dbReference>
<dbReference type="VEuPathDB" id="FungiDB:YGL234W"/>
<dbReference type="eggNOG" id="KOG0237">
    <property type="taxonomic scope" value="Eukaryota"/>
</dbReference>
<dbReference type="GeneTree" id="ENSGT00390000000292"/>
<dbReference type="HOGENOM" id="CLU_005361_1_0_1"/>
<dbReference type="InParanoid" id="P07244"/>
<dbReference type="OMA" id="EVMQACC"/>
<dbReference type="OrthoDB" id="2018833at2759"/>
<dbReference type="BioCyc" id="MetaCyc:YGL234W-MONOMER"/>
<dbReference type="BioCyc" id="YEAST:YGL234W-MONOMER"/>
<dbReference type="Reactome" id="R-SCE-73817">
    <property type="pathway name" value="Purine ribonucleoside monophosphate biosynthesis"/>
</dbReference>
<dbReference type="UniPathway" id="UPA00074">
    <property type="reaction ID" value="UER00125"/>
</dbReference>
<dbReference type="UniPathway" id="UPA00074">
    <property type="reaction ID" value="UER00129"/>
</dbReference>
<dbReference type="BioGRID-ORCS" id="852617">
    <property type="hits" value="2 hits in 10 CRISPR screens"/>
</dbReference>
<dbReference type="PRO" id="PR:P07244"/>
<dbReference type="Proteomes" id="UP000002311">
    <property type="component" value="Chromosome VII"/>
</dbReference>
<dbReference type="RNAct" id="P07244">
    <property type="molecule type" value="protein"/>
</dbReference>
<dbReference type="GO" id="GO:0005737">
    <property type="term" value="C:cytoplasm"/>
    <property type="evidence" value="ECO:0007005"/>
    <property type="project" value="SGD"/>
</dbReference>
<dbReference type="GO" id="GO:0005829">
    <property type="term" value="C:cytosol"/>
    <property type="evidence" value="ECO:0000318"/>
    <property type="project" value="GO_Central"/>
</dbReference>
<dbReference type="GO" id="GO:0005524">
    <property type="term" value="F:ATP binding"/>
    <property type="evidence" value="ECO:0007669"/>
    <property type="project" value="UniProtKB-KW"/>
</dbReference>
<dbReference type="GO" id="GO:0046872">
    <property type="term" value="F:metal ion binding"/>
    <property type="evidence" value="ECO:0007669"/>
    <property type="project" value="UniProtKB-KW"/>
</dbReference>
<dbReference type="GO" id="GO:0004637">
    <property type="term" value="F:phosphoribosylamine-glycine ligase activity"/>
    <property type="evidence" value="ECO:0000250"/>
    <property type="project" value="SGD"/>
</dbReference>
<dbReference type="GO" id="GO:0004641">
    <property type="term" value="F:phosphoribosylformylglycinamidine cyclo-ligase activity"/>
    <property type="evidence" value="ECO:0000250"/>
    <property type="project" value="SGD"/>
</dbReference>
<dbReference type="GO" id="GO:0006189">
    <property type="term" value="P:'de novo' IMP biosynthetic process"/>
    <property type="evidence" value="ECO:0007669"/>
    <property type="project" value="UniProtKB-UniPathway"/>
</dbReference>
<dbReference type="GO" id="GO:0046084">
    <property type="term" value="P:adenine biosynthetic process"/>
    <property type="evidence" value="ECO:0000318"/>
    <property type="project" value="GO_Central"/>
</dbReference>
<dbReference type="GO" id="GO:0006144">
    <property type="term" value="P:purine nucleobase metabolic process"/>
    <property type="evidence" value="ECO:0000304"/>
    <property type="project" value="SGD"/>
</dbReference>
<dbReference type="GO" id="GO:0006164">
    <property type="term" value="P:purine nucleotide biosynthetic process"/>
    <property type="evidence" value="ECO:0000318"/>
    <property type="project" value="GO_Central"/>
</dbReference>
<dbReference type="CDD" id="cd02196">
    <property type="entry name" value="PurM"/>
    <property type="match status" value="1"/>
</dbReference>
<dbReference type="FunFam" id="3.40.50.20:FF:000006">
    <property type="entry name" value="Phosphoribosylamine--glycine ligase, chloroplastic"/>
    <property type="match status" value="1"/>
</dbReference>
<dbReference type="FunFam" id="3.30.1490.20:FF:000006">
    <property type="entry name" value="phosphoribosylamine--glycine ligase, chloroplastic-like"/>
    <property type="match status" value="1"/>
</dbReference>
<dbReference type="FunFam" id="3.30.1330.10:FF:000001">
    <property type="entry name" value="Phosphoribosylformylglycinamidine cyclo-ligase"/>
    <property type="match status" value="1"/>
</dbReference>
<dbReference type="FunFam" id="3.30.470.20:FF:000018">
    <property type="entry name" value="Trifunctional purine biosynthetic protein adenosine-3"/>
    <property type="match status" value="1"/>
</dbReference>
<dbReference type="FunFam" id="3.90.600.10:FF:000001">
    <property type="entry name" value="Trifunctional purine biosynthetic protein adenosine-3"/>
    <property type="match status" value="1"/>
</dbReference>
<dbReference type="FunFam" id="3.90.650.10:FF:000007">
    <property type="entry name" value="Trifunctional purine biosynthetic protein adenosine-3"/>
    <property type="match status" value="1"/>
</dbReference>
<dbReference type="Gene3D" id="3.40.50.20">
    <property type="match status" value="1"/>
</dbReference>
<dbReference type="Gene3D" id="3.30.1490.20">
    <property type="entry name" value="ATP-grasp fold, A domain"/>
    <property type="match status" value="1"/>
</dbReference>
<dbReference type="Gene3D" id="3.30.470.20">
    <property type="entry name" value="ATP-grasp fold, B domain"/>
    <property type="match status" value="1"/>
</dbReference>
<dbReference type="Gene3D" id="3.90.600.10">
    <property type="entry name" value="Phosphoribosylglycinamide synthetase, C-terminal domain"/>
    <property type="match status" value="1"/>
</dbReference>
<dbReference type="Gene3D" id="3.90.650.10">
    <property type="entry name" value="PurM-like C-terminal domain"/>
    <property type="match status" value="1"/>
</dbReference>
<dbReference type="Gene3D" id="3.30.1330.10">
    <property type="entry name" value="PurM-like, N-terminal domain"/>
    <property type="match status" value="1"/>
</dbReference>
<dbReference type="HAMAP" id="MF_00741">
    <property type="entry name" value="AIRS"/>
    <property type="match status" value="1"/>
</dbReference>
<dbReference type="HAMAP" id="MF_00138">
    <property type="entry name" value="GARS"/>
    <property type="match status" value="1"/>
</dbReference>
<dbReference type="InterPro" id="IPR011761">
    <property type="entry name" value="ATP-grasp"/>
</dbReference>
<dbReference type="InterPro" id="IPR013815">
    <property type="entry name" value="ATP_grasp_subdomain_1"/>
</dbReference>
<dbReference type="InterPro" id="IPR016185">
    <property type="entry name" value="PreATP-grasp_dom_sf"/>
</dbReference>
<dbReference type="InterPro" id="IPR020561">
    <property type="entry name" value="PRibGlycinamid_synth_ATP-grasp"/>
</dbReference>
<dbReference type="InterPro" id="IPR000115">
    <property type="entry name" value="PRibGlycinamide_synth"/>
</dbReference>
<dbReference type="InterPro" id="IPR020560">
    <property type="entry name" value="PRibGlycinamide_synth_C-dom"/>
</dbReference>
<dbReference type="InterPro" id="IPR037123">
    <property type="entry name" value="PRibGlycinamide_synth_C_sf"/>
</dbReference>
<dbReference type="InterPro" id="IPR020559">
    <property type="entry name" value="PRibGlycinamide_synth_CS"/>
</dbReference>
<dbReference type="InterPro" id="IPR020562">
    <property type="entry name" value="PRibGlycinamide_synth_N"/>
</dbReference>
<dbReference type="InterPro" id="IPR010918">
    <property type="entry name" value="PurM-like_C_dom"/>
</dbReference>
<dbReference type="InterPro" id="IPR036676">
    <property type="entry name" value="PurM-like_C_sf"/>
</dbReference>
<dbReference type="InterPro" id="IPR016188">
    <property type="entry name" value="PurM-like_N"/>
</dbReference>
<dbReference type="InterPro" id="IPR036921">
    <property type="entry name" value="PurM-like_N_sf"/>
</dbReference>
<dbReference type="InterPro" id="IPR004733">
    <property type="entry name" value="PurM_cligase"/>
</dbReference>
<dbReference type="InterPro" id="IPR011054">
    <property type="entry name" value="Rudment_hybrid_motif"/>
</dbReference>
<dbReference type="NCBIfam" id="TIGR00877">
    <property type="entry name" value="purD"/>
    <property type="match status" value="1"/>
</dbReference>
<dbReference type="NCBIfam" id="TIGR00878">
    <property type="entry name" value="purM"/>
    <property type="match status" value="1"/>
</dbReference>
<dbReference type="PANTHER" id="PTHR10520:SF12">
    <property type="entry name" value="TRIFUNCTIONAL PURINE BIOSYNTHETIC PROTEIN ADENOSINE-3"/>
    <property type="match status" value="1"/>
</dbReference>
<dbReference type="PANTHER" id="PTHR10520">
    <property type="entry name" value="TRIFUNCTIONAL PURINE BIOSYNTHETIC PROTEIN ADENOSINE-3-RELATED"/>
    <property type="match status" value="1"/>
</dbReference>
<dbReference type="Pfam" id="PF00586">
    <property type="entry name" value="AIRS"/>
    <property type="match status" value="1"/>
</dbReference>
<dbReference type="Pfam" id="PF02769">
    <property type="entry name" value="AIRS_C"/>
    <property type="match status" value="1"/>
</dbReference>
<dbReference type="Pfam" id="PF01071">
    <property type="entry name" value="GARS_A"/>
    <property type="match status" value="1"/>
</dbReference>
<dbReference type="Pfam" id="PF02843">
    <property type="entry name" value="GARS_C"/>
    <property type="match status" value="1"/>
</dbReference>
<dbReference type="Pfam" id="PF02844">
    <property type="entry name" value="GARS_N"/>
    <property type="match status" value="1"/>
</dbReference>
<dbReference type="SMART" id="SM01209">
    <property type="entry name" value="GARS_A"/>
    <property type="match status" value="1"/>
</dbReference>
<dbReference type="SMART" id="SM01210">
    <property type="entry name" value="GARS_C"/>
    <property type="match status" value="1"/>
</dbReference>
<dbReference type="SUPFAM" id="SSF56059">
    <property type="entry name" value="Glutathione synthetase ATP-binding domain-like"/>
    <property type="match status" value="1"/>
</dbReference>
<dbReference type="SUPFAM" id="SSF52440">
    <property type="entry name" value="PreATP-grasp domain"/>
    <property type="match status" value="1"/>
</dbReference>
<dbReference type="SUPFAM" id="SSF56042">
    <property type="entry name" value="PurM C-terminal domain-like"/>
    <property type="match status" value="1"/>
</dbReference>
<dbReference type="SUPFAM" id="SSF55326">
    <property type="entry name" value="PurM N-terminal domain-like"/>
    <property type="match status" value="1"/>
</dbReference>
<dbReference type="SUPFAM" id="SSF51246">
    <property type="entry name" value="Rudiment single hybrid motif"/>
    <property type="match status" value="1"/>
</dbReference>
<dbReference type="PROSITE" id="PS50975">
    <property type="entry name" value="ATP_GRASP"/>
    <property type="match status" value="1"/>
</dbReference>
<dbReference type="PROSITE" id="PS00184">
    <property type="entry name" value="GARS"/>
    <property type="match status" value="1"/>
</dbReference>
<evidence type="ECO:0000250" key="1">
    <source>
        <dbReference type="UniProtKB" id="P20772"/>
    </source>
</evidence>
<evidence type="ECO:0000255" key="2"/>
<evidence type="ECO:0000255" key="3">
    <source>
        <dbReference type="PROSITE-ProRule" id="PRU00409"/>
    </source>
</evidence>
<evidence type="ECO:0000269" key="4">
    <source>
    </source>
</evidence>
<evidence type="ECO:0000269" key="5">
    <source>
    </source>
</evidence>
<evidence type="ECO:0000303" key="6">
    <source>
    </source>
</evidence>
<evidence type="ECO:0000305" key="7"/>
<evidence type="ECO:0000312" key="8">
    <source>
        <dbReference type="SGD" id="S000003203"/>
    </source>
</evidence>
<evidence type="ECO:0007744" key="9">
    <source>
    </source>
</evidence>
<evidence type="ECO:0007744" key="10">
    <source>
    </source>
</evidence>
<keyword id="KW-0067">ATP-binding</keyword>
<keyword id="KW-0963">Cytoplasm</keyword>
<keyword id="KW-0903">Direct protein sequencing</keyword>
<keyword id="KW-0436">Ligase</keyword>
<keyword id="KW-0460">Magnesium</keyword>
<keyword id="KW-0464">Manganese</keyword>
<keyword id="KW-0479">Metal-binding</keyword>
<keyword id="KW-0511">Multifunctional enzyme</keyword>
<keyword id="KW-0547">Nucleotide-binding</keyword>
<keyword id="KW-0597">Phosphoprotein</keyword>
<keyword id="KW-0658">Purine biosynthesis</keyword>
<keyword id="KW-1185">Reference proteome</keyword>
<comment type="function">
    <text evidence="1">Catalyzes the second and fifth step in the 'de novo' purine biosynthesis pathway; contains phosphoribosylamine--glycine ligase (GARS) and phosphoribosylformylglycinamidine cyclo-ligase (AIRS) activities.</text>
</comment>
<comment type="catalytic activity">
    <reaction evidence="1">
        <text>5-phospho-beta-D-ribosylamine + glycine + ATP = N(1)-(5-phospho-beta-D-ribosyl)glycinamide + ADP + phosphate + H(+)</text>
        <dbReference type="Rhea" id="RHEA:17453"/>
        <dbReference type="ChEBI" id="CHEBI:15378"/>
        <dbReference type="ChEBI" id="CHEBI:30616"/>
        <dbReference type="ChEBI" id="CHEBI:43474"/>
        <dbReference type="ChEBI" id="CHEBI:57305"/>
        <dbReference type="ChEBI" id="CHEBI:58681"/>
        <dbReference type="ChEBI" id="CHEBI:143788"/>
        <dbReference type="ChEBI" id="CHEBI:456216"/>
        <dbReference type="EC" id="6.3.4.13"/>
    </reaction>
</comment>
<comment type="catalytic activity">
    <reaction evidence="1">
        <text>2-formamido-N(1)-(5-O-phospho-beta-D-ribosyl)acetamidine + ATP = 5-amino-1-(5-phospho-beta-D-ribosyl)imidazole + ADP + phosphate + H(+)</text>
        <dbReference type="Rhea" id="RHEA:23032"/>
        <dbReference type="ChEBI" id="CHEBI:15378"/>
        <dbReference type="ChEBI" id="CHEBI:30616"/>
        <dbReference type="ChEBI" id="CHEBI:43474"/>
        <dbReference type="ChEBI" id="CHEBI:137981"/>
        <dbReference type="ChEBI" id="CHEBI:147287"/>
        <dbReference type="ChEBI" id="CHEBI:456216"/>
        <dbReference type="EC" id="6.3.3.1"/>
    </reaction>
</comment>
<comment type="cofactor">
    <cofactor evidence="3">
        <name>Mg(2+)</name>
        <dbReference type="ChEBI" id="CHEBI:18420"/>
    </cofactor>
    <cofactor evidence="3">
        <name>Mn(2+)</name>
        <dbReference type="ChEBI" id="CHEBI:29035"/>
    </cofactor>
    <text evidence="7">Binds two magnesium or manganese ions per subunit.</text>
</comment>
<comment type="pathway">
    <text>Purine metabolism; IMP biosynthesis via de novo pathway; 5-amino-1-(5-phospho-D-ribosyl)imidazole from N(2)-formyl-N(1)-(5-phospho-D-ribosyl)glycinamide: step 2/2.</text>
</comment>
<comment type="pathway">
    <text>Purine metabolism; IMP biosynthesis via de novo pathway; N(1)-(5-phospho-D-ribosyl)glycinamide from 5-phospho-alpha-D-ribose 1-diphosphate: step 2/2.</text>
</comment>
<comment type="subcellular location">
    <subcellularLocation>
        <location evidence="4">Cytoplasm</location>
    </subcellularLocation>
</comment>
<comment type="miscellaneous">
    <text evidence="5">Present with 35800 molecules/cell in log phase SD medium.</text>
</comment>
<comment type="similarity">
    <text evidence="7">In the N-terminal section; belongs to the GARS family.</text>
</comment>
<comment type="similarity">
    <text evidence="7">In the C-terminal section; belongs to the AIR synthase family.</text>
</comment>
<accession>P07244</accession>
<accession>D6VVA0</accession>
<accession>E9P907</accession>